<protein>
    <recommendedName>
        <fullName evidence="1">Probable chemoreceptor glutamine deamidase CheD</fullName>
        <ecNumber evidence="1">3.5.1.44</ecNumber>
    </recommendedName>
</protein>
<reference key="1">
    <citation type="submission" date="2007-03" db="EMBL/GenBank/DDBJ databases">
        <authorList>
            <person name="Heidelberg J."/>
        </authorList>
    </citation>
    <scope>NUCLEOTIDE SEQUENCE [LARGE SCALE GENOMIC DNA]</scope>
    <source>
        <strain>ATCC 39541 / Classical Ogawa 395 / O395</strain>
    </source>
</reference>
<reference key="2">
    <citation type="journal article" date="2008" name="PLoS ONE">
        <title>A recalibrated molecular clock and independent origins for the cholera pandemic clones.</title>
        <authorList>
            <person name="Feng L."/>
            <person name="Reeves P.R."/>
            <person name="Lan R."/>
            <person name="Ren Y."/>
            <person name="Gao C."/>
            <person name="Zhou Z."/>
            <person name="Ren Y."/>
            <person name="Cheng J."/>
            <person name="Wang W."/>
            <person name="Wang J."/>
            <person name="Qian W."/>
            <person name="Li D."/>
            <person name="Wang L."/>
        </authorList>
    </citation>
    <scope>NUCLEOTIDE SEQUENCE [LARGE SCALE GENOMIC DNA]</scope>
    <source>
        <strain>ATCC 39541 / Classical Ogawa 395 / O395</strain>
    </source>
</reference>
<feature type="chain" id="PRO_1000073518" description="Probable chemoreceptor glutamine deamidase CheD">
    <location>
        <begin position="1"/>
        <end position="233"/>
    </location>
</feature>
<accession>A5F1A0</accession>
<accession>C3M728</accession>
<dbReference type="EC" id="3.5.1.44" evidence="1"/>
<dbReference type="EMBL" id="CP000626">
    <property type="protein sequence ID" value="ABQ18634.1"/>
    <property type="molecule type" value="Genomic_DNA"/>
</dbReference>
<dbReference type="EMBL" id="CP001236">
    <property type="protein sequence ID" value="ACP11941.1"/>
    <property type="molecule type" value="Genomic_DNA"/>
</dbReference>
<dbReference type="SMR" id="A5F1A0"/>
<dbReference type="KEGG" id="vco:VC0395_0153"/>
<dbReference type="KEGG" id="vcr:VC395_A1111"/>
<dbReference type="PATRIC" id="fig|345073.21.peg.3834"/>
<dbReference type="eggNOG" id="COG1871">
    <property type="taxonomic scope" value="Bacteria"/>
</dbReference>
<dbReference type="HOGENOM" id="CLU_087854_0_0_6"/>
<dbReference type="OrthoDB" id="9807202at2"/>
<dbReference type="Proteomes" id="UP000000249">
    <property type="component" value="Chromosome 1"/>
</dbReference>
<dbReference type="GO" id="GO:0050568">
    <property type="term" value="F:protein-glutamine glutaminase activity"/>
    <property type="evidence" value="ECO:0007669"/>
    <property type="project" value="UniProtKB-UniRule"/>
</dbReference>
<dbReference type="GO" id="GO:0006935">
    <property type="term" value="P:chemotaxis"/>
    <property type="evidence" value="ECO:0007669"/>
    <property type="project" value="UniProtKB-UniRule"/>
</dbReference>
<dbReference type="CDD" id="cd16352">
    <property type="entry name" value="CheD"/>
    <property type="match status" value="1"/>
</dbReference>
<dbReference type="FunFam" id="3.30.1330.200:FF:000002">
    <property type="entry name" value="Probable chemoreceptor glutamine deamidase CheD"/>
    <property type="match status" value="1"/>
</dbReference>
<dbReference type="Gene3D" id="3.30.1330.200">
    <property type="match status" value="1"/>
</dbReference>
<dbReference type="HAMAP" id="MF_01440">
    <property type="entry name" value="CheD"/>
    <property type="match status" value="1"/>
</dbReference>
<dbReference type="InterPro" id="IPR038592">
    <property type="entry name" value="CheD-like_sf"/>
</dbReference>
<dbReference type="InterPro" id="IPR005659">
    <property type="entry name" value="Chemorcpt_Glu_NH3ase_CheD"/>
</dbReference>
<dbReference type="InterPro" id="IPR011324">
    <property type="entry name" value="Cytotoxic_necrot_fac-like_cat"/>
</dbReference>
<dbReference type="NCBIfam" id="NF010016">
    <property type="entry name" value="PRK13493.1"/>
    <property type="match status" value="1"/>
</dbReference>
<dbReference type="PANTHER" id="PTHR35147">
    <property type="entry name" value="CHEMORECEPTOR GLUTAMINE DEAMIDASE CHED-RELATED"/>
    <property type="match status" value="1"/>
</dbReference>
<dbReference type="PANTHER" id="PTHR35147:SF2">
    <property type="entry name" value="CHEMORECEPTOR GLUTAMINE DEAMIDASE CHED-RELATED"/>
    <property type="match status" value="1"/>
</dbReference>
<dbReference type="Pfam" id="PF03975">
    <property type="entry name" value="CheD"/>
    <property type="match status" value="1"/>
</dbReference>
<dbReference type="SUPFAM" id="SSF64438">
    <property type="entry name" value="CNF1/YfiH-like putative cysteine hydrolases"/>
    <property type="match status" value="1"/>
</dbReference>
<sequence>MLVVAVRFSIIWDILFMSDSKLATKRKLKQEEAKGQYYRFNHPSDHRHWVKVMPGGVYATSDQEIIHTGLGSCVSACAWDIEMKVGGMNHFLLPFNNQFESQHWHPQALLSDSSRYGCYAMEVLINRLLSMGAERERLKFKLFGGAHLMGYQSLVGEKNVEFVLEYAKREKLNVVAQDLGGAQPRKLLFDPQAGQAWVKRIGFSSAHAIKQDEELYQHSIDKQIPSDDVELFQ</sequence>
<name>CHED_VIBC3</name>
<evidence type="ECO:0000255" key="1">
    <source>
        <dbReference type="HAMAP-Rule" id="MF_01440"/>
    </source>
</evidence>
<organism>
    <name type="scientific">Vibrio cholerae serotype O1 (strain ATCC 39541 / Classical Ogawa 395 / O395)</name>
    <dbReference type="NCBI Taxonomy" id="345073"/>
    <lineage>
        <taxon>Bacteria</taxon>
        <taxon>Pseudomonadati</taxon>
        <taxon>Pseudomonadota</taxon>
        <taxon>Gammaproteobacteria</taxon>
        <taxon>Vibrionales</taxon>
        <taxon>Vibrionaceae</taxon>
        <taxon>Vibrio</taxon>
    </lineage>
</organism>
<comment type="function">
    <text evidence="1">Probably deamidates glutamine residues to glutamate on methyl-accepting chemotaxis receptors (MCPs), playing an important role in chemotaxis.</text>
</comment>
<comment type="catalytic activity">
    <reaction evidence="1">
        <text>L-glutaminyl-[protein] + H2O = L-glutamyl-[protein] + NH4(+)</text>
        <dbReference type="Rhea" id="RHEA:16441"/>
        <dbReference type="Rhea" id="RHEA-COMP:10207"/>
        <dbReference type="Rhea" id="RHEA-COMP:10208"/>
        <dbReference type="ChEBI" id="CHEBI:15377"/>
        <dbReference type="ChEBI" id="CHEBI:28938"/>
        <dbReference type="ChEBI" id="CHEBI:29973"/>
        <dbReference type="ChEBI" id="CHEBI:30011"/>
        <dbReference type="EC" id="3.5.1.44"/>
    </reaction>
</comment>
<comment type="similarity">
    <text evidence="1">Belongs to the CheD family.</text>
</comment>
<gene>
    <name evidence="1" type="primary">cheD</name>
    <name type="ordered locus">VC0395_0153</name>
    <name type="ordered locus">VC395_A1111</name>
</gene>
<proteinExistence type="inferred from homology"/>
<keyword id="KW-0145">Chemotaxis</keyword>
<keyword id="KW-0378">Hydrolase</keyword>